<comment type="similarity">
    <text evidence="2">Belongs to the UPF0213 family.</text>
</comment>
<protein>
    <recommendedName>
        <fullName>UPF0213 protein MW0443</fullName>
    </recommendedName>
</protein>
<sequence>MDSHFVYIVKCSDGSLYTGYAKDVNARVEKHNRGQGAKYTKVRRPVHLVYQEMYETKSEALKREYEIKTYTRQKKLRLIKER</sequence>
<proteinExistence type="inferred from homology"/>
<name>Y443_STAAW</name>
<accession>P67353</accession>
<accession>Q99WB5</accession>
<reference key="1">
    <citation type="journal article" date="2002" name="Lancet">
        <title>Genome and virulence determinants of high virulence community-acquired MRSA.</title>
        <authorList>
            <person name="Baba T."/>
            <person name="Takeuchi F."/>
            <person name="Kuroda M."/>
            <person name="Yuzawa H."/>
            <person name="Aoki K."/>
            <person name="Oguchi A."/>
            <person name="Nagai Y."/>
            <person name="Iwama N."/>
            <person name="Asano K."/>
            <person name="Naimi T."/>
            <person name="Kuroda H."/>
            <person name="Cui L."/>
            <person name="Yamamoto K."/>
            <person name="Hiramatsu K."/>
        </authorList>
    </citation>
    <scope>NUCLEOTIDE SEQUENCE [LARGE SCALE GENOMIC DNA]</scope>
    <source>
        <strain>MW2</strain>
    </source>
</reference>
<organism>
    <name type="scientific">Staphylococcus aureus (strain MW2)</name>
    <dbReference type="NCBI Taxonomy" id="196620"/>
    <lineage>
        <taxon>Bacteria</taxon>
        <taxon>Bacillati</taxon>
        <taxon>Bacillota</taxon>
        <taxon>Bacilli</taxon>
        <taxon>Bacillales</taxon>
        <taxon>Staphylococcaceae</taxon>
        <taxon>Staphylococcus</taxon>
    </lineage>
</organism>
<evidence type="ECO:0000255" key="1">
    <source>
        <dbReference type="PROSITE-ProRule" id="PRU00977"/>
    </source>
</evidence>
<evidence type="ECO:0000305" key="2"/>
<feature type="chain" id="PRO_0000161383" description="UPF0213 protein MW0443">
    <location>
        <begin position="1"/>
        <end position="82"/>
    </location>
</feature>
<feature type="domain" description="GIY-YIG" evidence="1">
    <location>
        <begin position="2"/>
        <end position="77"/>
    </location>
</feature>
<dbReference type="EMBL" id="BA000033">
    <property type="protein sequence ID" value="BAB94308.1"/>
    <property type="molecule type" value="Genomic_DNA"/>
</dbReference>
<dbReference type="RefSeq" id="WP_000377064.1">
    <property type="nucleotide sequence ID" value="NC_003923.1"/>
</dbReference>
<dbReference type="SMR" id="P67353"/>
<dbReference type="KEGG" id="sam:MW0443"/>
<dbReference type="HOGENOM" id="CLU_135650_0_3_9"/>
<dbReference type="CDD" id="cd10456">
    <property type="entry name" value="GIY-YIG_UPF0213"/>
    <property type="match status" value="1"/>
</dbReference>
<dbReference type="Gene3D" id="3.40.1440.10">
    <property type="entry name" value="GIY-YIG endonuclease"/>
    <property type="match status" value="1"/>
</dbReference>
<dbReference type="InterPro" id="IPR000305">
    <property type="entry name" value="GIY-YIG_endonuc"/>
</dbReference>
<dbReference type="InterPro" id="IPR035901">
    <property type="entry name" value="GIY-YIG_endonuc_sf"/>
</dbReference>
<dbReference type="InterPro" id="IPR050190">
    <property type="entry name" value="UPF0213_domain"/>
</dbReference>
<dbReference type="PANTHER" id="PTHR34477">
    <property type="entry name" value="UPF0213 PROTEIN YHBQ"/>
    <property type="match status" value="1"/>
</dbReference>
<dbReference type="PANTHER" id="PTHR34477:SF1">
    <property type="entry name" value="UPF0213 PROTEIN YHBQ"/>
    <property type="match status" value="1"/>
</dbReference>
<dbReference type="Pfam" id="PF01541">
    <property type="entry name" value="GIY-YIG"/>
    <property type="match status" value="1"/>
</dbReference>
<dbReference type="SMART" id="SM00465">
    <property type="entry name" value="GIYc"/>
    <property type="match status" value="1"/>
</dbReference>
<dbReference type="SUPFAM" id="SSF82771">
    <property type="entry name" value="GIY-YIG endonuclease"/>
    <property type="match status" value="1"/>
</dbReference>
<dbReference type="PROSITE" id="PS50164">
    <property type="entry name" value="GIY_YIG"/>
    <property type="match status" value="1"/>
</dbReference>
<gene>
    <name type="ordered locus">MW0443</name>
</gene>